<sequence length="152" mass="16840">MGLSTLEQKLTEMITAPVEALGYELVGIEFIRGRTSTLRIYIDSEDGINVDDCADVSHQVSAVLDVEDPISVAYNLEVSSPGLDRPMFTADHYARFQGEEVALVLRMAVQNRRKWQGIIKAVDGEMITVTVEGKDEVFALSNIQKANLVPHF</sequence>
<gene>
    <name evidence="1" type="primary">rimP</name>
    <name type="ordered locus">SPA3156</name>
</gene>
<protein>
    <recommendedName>
        <fullName evidence="1">Ribosome maturation factor RimP</fullName>
    </recommendedName>
</protein>
<comment type="function">
    <text evidence="1">Required for maturation of 30S ribosomal subunits.</text>
</comment>
<comment type="subcellular location">
    <subcellularLocation>
        <location evidence="1">Cytoplasm</location>
    </subcellularLocation>
</comment>
<comment type="similarity">
    <text evidence="1">Belongs to the RimP family.</text>
</comment>
<comment type="sequence caution" evidence="2">
    <conflict type="erroneous initiation">
        <sequence resource="EMBL-CDS" id="AAV78983"/>
    </conflict>
</comment>
<evidence type="ECO:0000255" key="1">
    <source>
        <dbReference type="HAMAP-Rule" id="MF_01077"/>
    </source>
</evidence>
<evidence type="ECO:0000305" key="2"/>
<accession>Q5PLA8</accession>
<organism>
    <name type="scientific">Salmonella paratyphi A (strain ATCC 9150 / SARB42)</name>
    <dbReference type="NCBI Taxonomy" id="295319"/>
    <lineage>
        <taxon>Bacteria</taxon>
        <taxon>Pseudomonadati</taxon>
        <taxon>Pseudomonadota</taxon>
        <taxon>Gammaproteobacteria</taxon>
        <taxon>Enterobacterales</taxon>
        <taxon>Enterobacteriaceae</taxon>
        <taxon>Salmonella</taxon>
    </lineage>
</organism>
<dbReference type="EMBL" id="CP000026">
    <property type="protein sequence ID" value="AAV78983.1"/>
    <property type="status" value="ALT_INIT"/>
    <property type="molecule type" value="Genomic_DNA"/>
</dbReference>
<dbReference type="SMR" id="Q5PLA8"/>
<dbReference type="KEGG" id="spt:SPA3156"/>
<dbReference type="HOGENOM" id="CLU_070525_1_1_6"/>
<dbReference type="Proteomes" id="UP000008185">
    <property type="component" value="Chromosome"/>
</dbReference>
<dbReference type="GO" id="GO:0005829">
    <property type="term" value="C:cytosol"/>
    <property type="evidence" value="ECO:0007669"/>
    <property type="project" value="TreeGrafter"/>
</dbReference>
<dbReference type="GO" id="GO:0000028">
    <property type="term" value="P:ribosomal small subunit assembly"/>
    <property type="evidence" value="ECO:0007669"/>
    <property type="project" value="TreeGrafter"/>
</dbReference>
<dbReference type="GO" id="GO:0006412">
    <property type="term" value="P:translation"/>
    <property type="evidence" value="ECO:0007669"/>
    <property type="project" value="TreeGrafter"/>
</dbReference>
<dbReference type="CDD" id="cd01734">
    <property type="entry name" value="YlxS_C"/>
    <property type="match status" value="1"/>
</dbReference>
<dbReference type="FunFam" id="2.30.30.180:FF:000001">
    <property type="entry name" value="Ribosome maturation factor RimP"/>
    <property type="match status" value="1"/>
</dbReference>
<dbReference type="FunFam" id="3.30.300.70:FF:000001">
    <property type="entry name" value="Ribosome maturation factor RimP"/>
    <property type="match status" value="1"/>
</dbReference>
<dbReference type="Gene3D" id="2.30.30.180">
    <property type="entry name" value="Ribosome maturation factor RimP, C-terminal domain"/>
    <property type="match status" value="1"/>
</dbReference>
<dbReference type="Gene3D" id="3.30.300.70">
    <property type="entry name" value="RimP-like superfamily, N-terminal"/>
    <property type="match status" value="1"/>
</dbReference>
<dbReference type="HAMAP" id="MF_01077">
    <property type="entry name" value="RimP"/>
    <property type="match status" value="1"/>
</dbReference>
<dbReference type="InterPro" id="IPR003728">
    <property type="entry name" value="Ribosome_maturation_RimP"/>
</dbReference>
<dbReference type="InterPro" id="IPR028998">
    <property type="entry name" value="RimP_C"/>
</dbReference>
<dbReference type="InterPro" id="IPR036847">
    <property type="entry name" value="RimP_C_sf"/>
</dbReference>
<dbReference type="InterPro" id="IPR028989">
    <property type="entry name" value="RimP_N"/>
</dbReference>
<dbReference type="InterPro" id="IPR035956">
    <property type="entry name" value="RimP_N_sf"/>
</dbReference>
<dbReference type="NCBIfam" id="NF000927">
    <property type="entry name" value="PRK00092.1-1"/>
    <property type="match status" value="1"/>
</dbReference>
<dbReference type="PANTHER" id="PTHR33867">
    <property type="entry name" value="RIBOSOME MATURATION FACTOR RIMP"/>
    <property type="match status" value="1"/>
</dbReference>
<dbReference type="PANTHER" id="PTHR33867:SF1">
    <property type="entry name" value="RIBOSOME MATURATION FACTOR RIMP"/>
    <property type="match status" value="1"/>
</dbReference>
<dbReference type="Pfam" id="PF17384">
    <property type="entry name" value="DUF150_C"/>
    <property type="match status" value="1"/>
</dbReference>
<dbReference type="Pfam" id="PF02576">
    <property type="entry name" value="RimP_N"/>
    <property type="match status" value="1"/>
</dbReference>
<dbReference type="SUPFAM" id="SSF74942">
    <property type="entry name" value="YhbC-like, C-terminal domain"/>
    <property type="match status" value="1"/>
</dbReference>
<dbReference type="SUPFAM" id="SSF75420">
    <property type="entry name" value="YhbC-like, N-terminal domain"/>
    <property type="match status" value="1"/>
</dbReference>
<keyword id="KW-0963">Cytoplasm</keyword>
<keyword id="KW-0690">Ribosome biogenesis</keyword>
<reference key="1">
    <citation type="journal article" date="2004" name="Nat. Genet.">
        <title>Comparison of genome degradation in Paratyphi A and Typhi, human-restricted serovars of Salmonella enterica that cause typhoid.</title>
        <authorList>
            <person name="McClelland M."/>
            <person name="Sanderson K.E."/>
            <person name="Clifton S.W."/>
            <person name="Latreille P."/>
            <person name="Porwollik S."/>
            <person name="Sabo A."/>
            <person name="Meyer R."/>
            <person name="Bieri T."/>
            <person name="Ozersky P."/>
            <person name="McLellan M."/>
            <person name="Harkins C.R."/>
            <person name="Wang C."/>
            <person name="Nguyen C."/>
            <person name="Berghoff A."/>
            <person name="Elliott G."/>
            <person name="Kohlberg S."/>
            <person name="Strong C."/>
            <person name="Du F."/>
            <person name="Carter J."/>
            <person name="Kremizki C."/>
            <person name="Layman D."/>
            <person name="Leonard S."/>
            <person name="Sun H."/>
            <person name="Fulton L."/>
            <person name="Nash W."/>
            <person name="Miner T."/>
            <person name="Minx P."/>
            <person name="Delehaunty K."/>
            <person name="Fronick C."/>
            <person name="Magrini V."/>
            <person name="Nhan M."/>
            <person name="Warren W."/>
            <person name="Florea L."/>
            <person name="Spieth J."/>
            <person name="Wilson R.K."/>
        </authorList>
    </citation>
    <scope>NUCLEOTIDE SEQUENCE [LARGE SCALE GENOMIC DNA]</scope>
    <source>
        <strain>ATCC 9150 / SARB42</strain>
    </source>
</reference>
<feature type="chain" id="PRO_0000229275" description="Ribosome maturation factor RimP">
    <location>
        <begin position="1"/>
        <end position="152"/>
    </location>
</feature>
<proteinExistence type="inferred from homology"/>
<name>RIMP_SALPA</name>